<comment type="function">
    <text evidence="1">Component of the cytochrome b6-f complex, which mediates electron transfer between photosystem II (PSII) and photosystem I (PSI), cyclic electron flow around PSI, and state transitions. PetG is required for either the stability or assembly of the cytochrome b6-f complex.</text>
</comment>
<comment type="subunit">
    <text evidence="1">The 4 large subunits of the cytochrome b6-f complex are cytochrome b6, subunit IV (17 kDa polypeptide, PetD), cytochrome f and the Rieske protein, while the 4 small subunits are PetG, PetL, PetM and PetN. The complex functions as a dimer.</text>
</comment>
<comment type="subcellular location">
    <subcellularLocation>
        <location evidence="1">Plastid</location>
        <location evidence="1">Chloroplast thylakoid membrane</location>
        <topology evidence="1">Single-pass membrane protein</topology>
    </subcellularLocation>
</comment>
<comment type="similarity">
    <text evidence="1">Belongs to the PetG family.</text>
</comment>
<feature type="chain" id="PRO_0000216405" description="Cytochrome b6-f complex subunit 5">
    <location>
        <begin position="1"/>
        <end position="37"/>
    </location>
</feature>
<feature type="transmembrane region" description="Helical" evidence="1">
    <location>
        <begin position="5"/>
        <end position="25"/>
    </location>
</feature>
<feature type="sequence conflict" description="In Ref. 3; AA sequence." evidence="2" ref="3">
    <original>P</original>
    <variation>G</variation>
    <location>
        <position position="15"/>
    </location>
</feature>
<feature type="sequence conflict" description="In Ref. 1; CAA52449." evidence="2" ref="1">
    <original>G</original>
    <variation>P</variation>
    <location>
        <position position="20"/>
    </location>
</feature>
<feature type="helix" evidence="3">
    <location>
        <begin position="4"/>
        <end position="32"/>
    </location>
</feature>
<evidence type="ECO:0000255" key="1">
    <source>
        <dbReference type="HAMAP-Rule" id="MF_00432"/>
    </source>
</evidence>
<evidence type="ECO:0000305" key="2"/>
<evidence type="ECO:0007829" key="3">
    <source>
        <dbReference type="PDB" id="9ES7"/>
    </source>
</evidence>
<sequence>MIEVFLFGIVLGLIPITLAGLFVTAYLQYRRGDQLDL</sequence>
<dbReference type="EMBL" id="X74430">
    <property type="protein sequence ID" value="CAA52449.1"/>
    <property type="molecule type" value="Genomic_DNA"/>
</dbReference>
<dbReference type="EMBL" id="AJ400848">
    <property type="protein sequence ID" value="CAB88747.1"/>
    <property type="molecule type" value="Genomic_DNA"/>
</dbReference>
<dbReference type="RefSeq" id="NP_054954.1">
    <property type="nucleotide sequence ID" value="NC_002202.1"/>
</dbReference>
<dbReference type="PDB" id="6RQF">
    <property type="method" value="EM"/>
    <property type="resolution" value="3.58 A"/>
    <property type="chains" value="G/O=1-37"/>
</dbReference>
<dbReference type="PDB" id="7QRM">
    <property type="method" value="EM"/>
    <property type="resolution" value="2.70 A"/>
    <property type="chains" value="G/O=1-37"/>
</dbReference>
<dbReference type="PDB" id="7ZYV">
    <property type="method" value="EM"/>
    <property type="resolution" value="2.13 A"/>
    <property type="chains" value="G/O=1-37"/>
</dbReference>
<dbReference type="PDB" id="9ES7">
    <property type="method" value="EM"/>
    <property type="resolution" value="1.94 A"/>
    <property type="chains" value="G/O=1-37"/>
</dbReference>
<dbReference type="PDB" id="9ES8">
    <property type="method" value="EM"/>
    <property type="resolution" value="2.24 A"/>
    <property type="chains" value="G/O=1-37"/>
</dbReference>
<dbReference type="PDB" id="9ES9">
    <property type="method" value="EM"/>
    <property type="resolution" value="2.33 A"/>
    <property type="chains" value="G/O=1-37"/>
</dbReference>
<dbReference type="PDBsum" id="6RQF"/>
<dbReference type="PDBsum" id="7QRM"/>
<dbReference type="PDBsum" id="7ZYV"/>
<dbReference type="PDBsum" id="9ES7"/>
<dbReference type="PDBsum" id="9ES8"/>
<dbReference type="PDBsum" id="9ES9"/>
<dbReference type="EMDB" id="EMD-19938"/>
<dbReference type="EMDB" id="EMD-19939"/>
<dbReference type="EMDB" id="EMD-19940"/>
<dbReference type="SMR" id="P69461"/>
<dbReference type="FunCoup" id="P69461">
    <property type="interactions" value="33"/>
</dbReference>
<dbReference type="IntAct" id="P69461">
    <property type="interactions" value="1"/>
</dbReference>
<dbReference type="STRING" id="3562.P69461"/>
<dbReference type="GeneID" id="2715600"/>
<dbReference type="KEGG" id="soe:2715600"/>
<dbReference type="InParanoid" id="P69461"/>
<dbReference type="OrthoDB" id="35473at2759"/>
<dbReference type="Proteomes" id="UP001155700">
    <property type="component" value="Chloroplast Pltd"/>
</dbReference>
<dbReference type="GO" id="GO:0009535">
    <property type="term" value="C:chloroplast thylakoid membrane"/>
    <property type="evidence" value="ECO:0007669"/>
    <property type="project" value="UniProtKB-SubCell"/>
</dbReference>
<dbReference type="GO" id="GO:0009512">
    <property type="term" value="C:cytochrome b6f complex"/>
    <property type="evidence" value="ECO:0007669"/>
    <property type="project" value="InterPro"/>
</dbReference>
<dbReference type="GO" id="GO:0045158">
    <property type="term" value="F:electron transporter, transferring electrons within cytochrome b6/f complex of photosystem II activity"/>
    <property type="evidence" value="ECO:0007669"/>
    <property type="project" value="UniProtKB-UniRule"/>
</dbReference>
<dbReference type="GO" id="GO:0017004">
    <property type="term" value="P:cytochrome complex assembly"/>
    <property type="evidence" value="ECO:0007669"/>
    <property type="project" value="UniProtKB-UniRule"/>
</dbReference>
<dbReference type="GO" id="GO:0015979">
    <property type="term" value="P:photosynthesis"/>
    <property type="evidence" value="ECO:0007669"/>
    <property type="project" value="UniProtKB-KW"/>
</dbReference>
<dbReference type="HAMAP" id="MF_00432">
    <property type="entry name" value="Cytb6_f_PetG"/>
    <property type="match status" value="1"/>
</dbReference>
<dbReference type="InterPro" id="IPR003683">
    <property type="entry name" value="Cyt_6/f_cplx_su5"/>
</dbReference>
<dbReference type="InterPro" id="IPR036099">
    <property type="entry name" value="Cyt_6/f_cplx_su5_sf"/>
</dbReference>
<dbReference type="NCBIfam" id="NF001907">
    <property type="entry name" value="PRK00665.1"/>
    <property type="match status" value="1"/>
</dbReference>
<dbReference type="Pfam" id="PF02529">
    <property type="entry name" value="PetG"/>
    <property type="match status" value="1"/>
</dbReference>
<dbReference type="PIRSF" id="PIRSF000034">
    <property type="entry name" value="Cyt_b6-f_V"/>
    <property type="match status" value="1"/>
</dbReference>
<dbReference type="SUPFAM" id="SSF103446">
    <property type="entry name" value="PetG subunit of the cytochrome b6f complex"/>
    <property type="match status" value="1"/>
</dbReference>
<protein>
    <recommendedName>
        <fullName evidence="1">Cytochrome b6-f complex subunit 5</fullName>
    </recommendedName>
    <alternativeName>
        <fullName evidence="1">Cytochrome b6-f complex subunit PetG</fullName>
    </alternativeName>
    <alternativeName>
        <fullName evidence="1">Cytochrome b6-f complex subunit V</fullName>
    </alternativeName>
</protein>
<keyword id="KW-0002">3D-structure</keyword>
<keyword id="KW-0150">Chloroplast</keyword>
<keyword id="KW-0903">Direct protein sequencing</keyword>
<keyword id="KW-0249">Electron transport</keyword>
<keyword id="KW-0472">Membrane</keyword>
<keyword id="KW-0602">Photosynthesis</keyword>
<keyword id="KW-0934">Plastid</keyword>
<keyword id="KW-1185">Reference proteome</keyword>
<keyword id="KW-0793">Thylakoid</keyword>
<keyword id="KW-0812">Transmembrane</keyword>
<keyword id="KW-1133">Transmembrane helix</keyword>
<keyword id="KW-0813">Transport</keyword>
<name>PETG_SPIOL</name>
<geneLocation type="chloroplast"/>
<accession>P69461</accession>
<accession>P12121</accession>
<accession>P32973</accession>
<gene>
    <name evidence="1" type="primary">petG</name>
    <name type="synonym">petE</name>
</gene>
<reference key="1">
    <citation type="submission" date="1993-07" db="EMBL/GenBank/DDBJ databases">
        <authorList>
            <person name="Oelmueller R."/>
        </authorList>
    </citation>
    <scope>NUCLEOTIDE SEQUENCE [GENOMIC DNA]</scope>
    <source>
        <strain>cv. Monatol</strain>
        <tissue>Seedling</tissue>
    </source>
</reference>
<reference key="2">
    <citation type="journal article" date="2001" name="Plant Mol. Biol.">
        <title>The plastid chromosome of spinach (Spinacia oleracea): complete nucleotide sequence and gene organization.</title>
        <authorList>
            <person name="Schmitz-Linneweber C."/>
            <person name="Maier R.M."/>
            <person name="Alcaraz J.-P."/>
            <person name="Cottet A."/>
            <person name="Herrmann R.G."/>
            <person name="Mache R."/>
        </authorList>
    </citation>
    <scope>NUCLEOTIDE SEQUENCE [LARGE SCALE GENOMIC DNA]</scope>
    <source>
        <strain>cv. Geant d'hiver</strain>
        <strain>cv. Monatol</strain>
    </source>
</reference>
<reference key="3">
    <citation type="journal article" date="1993" name="Photosyn. Res.">
        <title>Low molecular weight subunits associated with the cytochrome b6f complexes from spinach and Chlamydomonas reinhardtii.</title>
        <authorList>
            <person name="Schmidt C.L."/>
            <person name="Malkin R."/>
        </authorList>
    </citation>
    <scope>PROTEIN SEQUENCE OF 1-20</scope>
</reference>
<proteinExistence type="evidence at protein level"/>
<organism>
    <name type="scientific">Spinacia oleracea</name>
    <name type="common">Spinach</name>
    <dbReference type="NCBI Taxonomy" id="3562"/>
    <lineage>
        <taxon>Eukaryota</taxon>
        <taxon>Viridiplantae</taxon>
        <taxon>Streptophyta</taxon>
        <taxon>Embryophyta</taxon>
        <taxon>Tracheophyta</taxon>
        <taxon>Spermatophyta</taxon>
        <taxon>Magnoliopsida</taxon>
        <taxon>eudicotyledons</taxon>
        <taxon>Gunneridae</taxon>
        <taxon>Pentapetalae</taxon>
        <taxon>Caryophyllales</taxon>
        <taxon>Chenopodiaceae</taxon>
        <taxon>Chenopodioideae</taxon>
        <taxon>Anserineae</taxon>
        <taxon>Spinacia</taxon>
    </lineage>
</organism>